<comment type="function">
    <text evidence="3 4 6 7">V-SNARE binding protein that facilitates specific protein retrieval from a late endosome to the Golgi. Modulates the rate of arginine uptake. Involved in pH homeostasis. Required for the correct localization of IST2. May be involved in ion homeostasis together with IST2.</text>
</comment>
<comment type="subunit">
    <text evidence="4 5 6 7">Interacts with RHB1, IST2, TDA3 and YIF1.</text>
</comment>
<comment type="interaction">
    <interactant intactId="EBI-3796">
        <id>P53286</id>
    </interactant>
    <interactant intactId="EBI-21520">
        <id>P38250</id>
        <label>IST2</label>
    </interactant>
    <organismsDiffer>false</organismsDiffer>
    <experiments>2</experiments>
</comment>
<comment type="interaction">
    <interactant intactId="EBI-3796">
        <id>P53286</id>
    </interactant>
    <interactant intactId="EBI-15113">
        <id>P25378</id>
        <label>RHB1</label>
    </interactant>
    <organismsDiffer>false</organismsDiffer>
    <experiments>2</experiments>
</comment>
<comment type="interaction">
    <interactant intactId="EBI-3796">
        <id>P53286</id>
    </interactant>
    <interactant intactId="EBI-28230">
        <id>P53845</id>
        <label>YIF1</label>
    </interactant>
    <organismsDiffer>false</organismsDiffer>
    <experiments>2</experiments>
</comment>
<comment type="subcellular location">
    <subcellularLocation>
        <location>Cytoplasm</location>
    </subcellularLocation>
    <subcellularLocation>
        <location>Late endosome</location>
    </subcellularLocation>
</comment>
<dbReference type="EMBL" id="Z72927">
    <property type="protein sequence ID" value="CAA97155.1"/>
    <property type="molecule type" value="Genomic_DNA"/>
</dbReference>
<dbReference type="EMBL" id="BK006941">
    <property type="protein sequence ID" value="DAA08233.1"/>
    <property type="molecule type" value="Genomic_DNA"/>
</dbReference>
<dbReference type="PIR" id="S64451">
    <property type="entry name" value="S64451"/>
</dbReference>
<dbReference type="RefSeq" id="NP_011658.3">
    <property type="nucleotide sequence ID" value="NM_001181271.3"/>
</dbReference>
<dbReference type="BioGRID" id="33388">
    <property type="interactions" value="110"/>
</dbReference>
<dbReference type="DIP" id="DIP-5534N"/>
<dbReference type="FunCoup" id="P53286">
    <property type="interactions" value="190"/>
</dbReference>
<dbReference type="IntAct" id="P53286">
    <property type="interactions" value="12"/>
</dbReference>
<dbReference type="MINT" id="P53286"/>
<dbReference type="STRING" id="4932.YGR142W"/>
<dbReference type="iPTMnet" id="P53286"/>
<dbReference type="PaxDb" id="4932-YGR142W"/>
<dbReference type="PeptideAtlas" id="P53286"/>
<dbReference type="EnsemblFungi" id="YGR142W_mRNA">
    <property type="protein sequence ID" value="YGR142W"/>
    <property type="gene ID" value="YGR142W"/>
</dbReference>
<dbReference type="GeneID" id="853043"/>
<dbReference type="KEGG" id="sce:YGR142W"/>
<dbReference type="AGR" id="SGD:S000003374"/>
<dbReference type="SGD" id="S000003374">
    <property type="gene designation" value="BTN2"/>
</dbReference>
<dbReference type="VEuPathDB" id="FungiDB:YGR142W"/>
<dbReference type="eggNOG" id="ENOG502S308">
    <property type="taxonomic scope" value="Eukaryota"/>
</dbReference>
<dbReference type="HOGENOM" id="CLU_055876_0_0_1"/>
<dbReference type="InParanoid" id="P53286"/>
<dbReference type="OMA" id="MACANEL"/>
<dbReference type="OrthoDB" id="4067212at2759"/>
<dbReference type="BioCyc" id="YEAST:G3O-30846-MONOMER"/>
<dbReference type="BioGRID-ORCS" id="853043">
    <property type="hits" value="0 hits in 10 CRISPR screens"/>
</dbReference>
<dbReference type="PRO" id="PR:P53286"/>
<dbReference type="Proteomes" id="UP000002311">
    <property type="component" value="Chromosome VII"/>
</dbReference>
<dbReference type="RNAct" id="P53286">
    <property type="molecule type" value="protein"/>
</dbReference>
<dbReference type="GO" id="GO:0005829">
    <property type="term" value="C:cytosol"/>
    <property type="evidence" value="ECO:0000314"/>
    <property type="project" value="SGD"/>
</dbReference>
<dbReference type="GO" id="GO:0005770">
    <property type="term" value="C:late endosome"/>
    <property type="evidence" value="ECO:0000314"/>
    <property type="project" value="SGD"/>
</dbReference>
<dbReference type="GO" id="GO:0034399">
    <property type="term" value="C:nuclear periphery"/>
    <property type="evidence" value="ECO:0000314"/>
    <property type="project" value="SGD"/>
</dbReference>
<dbReference type="GO" id="GO:0005634">
    <property type="term" value="C:nucleus"/>
    <property type="evidence" value="ECO:0000314"/>
    <property type="project" value="SGD"/>
</dbReference>
<dbReference type="GO" id="GO:0048471">
    <property type="term" value="C:perinuclear region of cytoplasm"/>
    <property type="evidence" value="ECO:0000314"/>
    <property type="project" value="SGD"/>
</dbReference>
<dbReference type="GO" id="GO:0140311">
    <property type="term" value="F:protein sequestering activity"/>
    <property type="evidence" value="ECO:0000315"/>
    <property type="project" value="SGD"/>
</dbReference>
<dbReference type="GO" id="GO:0051087">
    <property type="term" value="F:protein-folding chaperone binding"/>
    <property type="evidence" value="ECO:0000353"/>
    <property type="project" value="SGD"/>
</dbReference>
<dbReference type="GO" id="GO:0000149">
    <property type="term" value="F:SNARE binding"/>
    <property type="evidence" value="ECO:0000314"/>
    <property type="project" value="SGD"/>
</dbReference>
<dbReference type="GO" id="GO:0006865">
    <property type="term" value="P:amino acid transport"/>
    <property type="evidence" value="ECO:0000315"/>
    <property type="project" value="SGD"/>
</dbReference>
<dbReference type="GO" id="GO:0006886">
    <property type="term" value="P:intracellular protein transport"/>
    <property type="evidence" value="ECO:0000315"/>
    <property type="project" value="SGD"/>
</dbReference>
<dbReference type="GO" id="GO:0006457">
    <property type="term" value="P:protein folding"/>
    <property type="evidence" value="ECO:0000315"/>
    <property type="project" value="SGD"/>
</dbReference>
<dbReference type="GO" id="GO:0034504">
    <property type="term" value="P:protein localization to nucleus"/>
    <property type="evidence" value="ECO:0000315"/>
    <property type="project" value="SGD"/>
</dbReference>
<dbReference type="GO" id="GO:0006885">
    <property type="term" value="P:regulation of pH"/>
    <property type="evidence" value="ECO:0000315"/>
    <property type="project" value="SGD"/>
</dbReference>
<dbReference type="GO" id="GO:0042147">
    <property type="term" value="P:retrograde transport, endosome to Golgi"/>
    <property type="evidence" value="ECO:0000315"/>
    <property type="project" value="SGD"/>
</dbReference>
<proteinExistence type="evidence at protein level"/>
<keyword id="KW-0175">Coiled coil</keyword>
<keyword id="KW-0963">Cytoplasm</keyword>
<keyword id="KW-0967">Endosome</keyword>
<keyword id="KW-1185">Reference proteome</keyword>
<sequence length="410" mass="47168">MFSIFNSPCVFEQLPSFSQPLHSRYFDCSSPVSYYPECKRRKAIKANLRAPKKSDANCSEPLRYALAETPNGYTLSLSKRIPYELFSKYVNEKLGELKENHYRPTYHVVQDFFGNQYYVEDEADEDALLRSALKDLDFRAIGKKIAKDLFQDYEIELNHRGDELSILSKKDKIFKEFSLDQVFEDVFVIGCGVENIDDGSREKYALLKIGLVKHEEEISEGGINEPKMPIIESKIDESHDDVNMSESLKEEEAEKAKEPLTKEDQIKKWIEEERLMQEESRKSEQEKAAKEDEERQKKEKEARLKARKESLINKQKTKRSQQKKLQNSKSLPISEIEASNKNNNSNSGSAESDNESINSDSDTTLDFSVSGNTLKKHASPLLEDVEDEEVDRYNESLSRSPKGNSIIEEI</sequence>
<gene>
    <name type="primary">BTN2</name>
    <name type="ordered locus">YGR142W</name>
</gene>
<accession>P53286</accession>
<accession>D6VUS2</accession>
<name>BTN2_YEAST</name>
<evidence type="ECO:0000255" key="1"/>
<evidence type="ECO:0000256" key="2">
    <source>
        <dbReference type="SAM" id="MobiDB-lite"/>
    </source>
</evidence>
<evidence type="ECO:0000269" key="3">
    <source>
    </source>
</evidence>
<evidence type="ECO:0000269" key="4">
    <source>
    </source>
</evidence>
<evidence type="ECO:0000269" key="5">
    <source>
    </source>
</evidence>
<evidence type="ECO:0000269" key="6">
    <source>
    </source>
</evidence>
<evidence type="ECO:0000269" key="7">
    <source>
    </source>
</evidence>
<organism>
    <name type="scientific">Saccharomyces cerevisiae (strain ATCC 204508 / S288c)</name>
    <name type="common">Baker's yeast</name>
    <dbReference type="NCBI Taxonomy" id="559292"/>
    <lineage>
        <taxon>Eukaryota</taxon>
        <taxon>Fungi</taxon>
        <taxon>Dikarya</taxon>
        <taxon>Ascomycota</taxon>
        <taxon>Saccharomycotina</taxon>
        <taxon>Saccharomycetes</taxon>
        <taxon>Saccharomycetales</taxon>
        <taxon>Saccharomycetaceae</taxon>
        <taxon>Saccharomyces</taxon>
    </lineage>
</organism>
<reference key="1">
    <citation type="journal article" date="1997" name="Nature">
        <title>The nucleotide sequence of Saccharomyces cerevisiae chromosome VII.</title>
        <authorList>
            <person name="Tettelin H."/>
            <person name="Agostoni-Carbone M.L."/>
            <person name="Albermann K."/>
            <person name="Albers M."/>
            <person name="Arroyo J."/>
            <person name="Backes U."/>
            <person name="Barreiros T."/>
            <person name="Bertani I."/>
            <person name="Bjourson A.J."/>
            <person name="Brueckner M."/>
            <person name="Bruschi C.V."/>
            <person name="Carignani G."/>
            <person name="Castagnoli L."/>
            <person name="Cerdan E."/>
            <person name="Clemente M.L."/>
            <person name="Coblenz A."/>
            <person name="Coglievina M."/>
            <person name="Coissac E."/>
            <person name="Defoor E."/>
            <person name="Del Bino S."/>
            <person name="Delius H."/>
            <person name="Delneri D."/>
            <person name="de Wergifosse P."/>
            <person name="Dujon B."/>
            <person name="Durand P."/>
            <person name="Entian K.-D."/>
            <person name="Eraso P."/>
            <person name="Escribano V."/>
            <person name="Fabiani L."/>
            <person name="Fartmann B."/>
            <person name="Feroli F."/>
            <person name="Feuermann M."/>
            <person name="Frontali L."/>
            <person name="Garcia-Gonzalez M."/>
            <person name="Garcia-Saez M.I."/>
            <person name="Goffeau A."/>
            <person name="Guerreiro P."/>
            <person name="Hani J."/>
            <person name="Hansen M."/>
            <person name="Hebling U."/>
            <person name="Hernandez K."/>
            <person name="Heumann K."/>
            <person name="Hilger F."/>
            <person name="Hofmann B."/>
            <person name="Indge K.J."/>
            <person name="James C.M."/>
            <person name="Klima R."/>
            <person name="Koetter P."/>
            <person name="Kramer B."/>
            <person name="Kramer W."/>
            <person name="Lauquin G."/>
            <person name="Leuther H."/>
            <person name="Louis E.J."/>
            <person name="Maillier E."/>
            <person name="Marconi A."/>
            <person name="Martegani E."/>
            <person name="Mazon M.J."/>
            <person name="Mazzoni C."/>
            <person name="McReynolds A.D.K."/>
            <person name="Melchioretto P."/>
            <person name="Mewes H.-W."/>
            <person name="Minenkova O."/>
            <person name="Mueller-Auer S."/>
            <person name="Nawrocki A."/>
            <person name="Netter P."/>
            <person name="Neu R."/>
            <person name="Nombela C."/>
            <person name="Oliver S.G."/>
            <person name="Panzeri L."/>
            <person name="Paoluzi S."/>
            <person name="Plevani P."/>
            <person name="Portetelle D."/>
            <person name="Portillo F."/>
            <person name="Potier S."/>
            <person name="Purnelle B."/>
            <person name="Rieger M."/>
            <person name="Riles L."/>
            <person name="Rinaldi T."/>
            <person name="Robben J."/>
            <person name="Rodrigues-Pousada C."/>
            <person name="Rodriguez-Belmonte E."/>
            <person name="Rodriguez-Torres A.M."/>
            <person name="Rose M."/>
            <person name="Ruzzi M."/>
            <person name="Saliola M."/>
            <person name="Sanchez-Perez M."/>
            <person name="Schaefer B."/>
            <person name="Schaefer M."/>
            <person name="Scharfe M."/>
            <person name="Schmidheini T."/>
            <person name="Schreer A."/>
            <person name="Skala J."/>
            <person name="Souciet J.-L."/>
            <person name="Steensma H.Y."/>
            <person name="Talla E."/>
            <person name="Thierry A."/>
            <person name="Vandenbol M."/>
            <person name="van der Aart Q.J.M."/>
            <person name="Van Dyck L."/>
            <person name="Vanoni M."/>
            <person name="Verhasselt P."/>
            <person name="Voet M."/>
            <person name="Volckaert G."/>
            <person name="Wambutt R."/>
            <person name="Watson M.D."/>
            <person name="Weber N."/>
            <person name="Wedler E."/>
            <person name="Wedler H."/>
            <person name="Wipfli P."/>
            <person name="Wolf K."/>
            <person name="Wright L.F."/>
            <person name="Zaccaria P."/>
            <person name="Zimmermann M."/>
            <person name="Zollner A."/>
            <person name="Kleine K."/>
        </authorList>
    </citation>
    <scope>NUCLEOTIDE SEQUENCE [LARGE SCALE GENOMIC DNA]</scope>
    <source>
        <strain>ATCC 204508 / S288c</strain>
    </source>
</reference>
<reference key="2">
    <citation type="journal article" date="2014" name="G3 (Bethesda)">
        <title>The reference genome sequence of Saccharomyces cerevisiae: Then and now.</title>
        <authorList>
            <person name="Engel S.R."/>
            <person name="Dietrich F.S."/>
            <person name="Fisk D.G."/>
            <person name="Binkley G."/>
            <person name="Balakrishnan R."/>
            <person name="Costanzo M.C."/>
            <person name="Dwight S.S."/>
            <person name="Hitz B.C."/>
            <person name="Karra K."/>
            <person name="Nash R.S."/>
            <person name="Weng S."/>
            <person name="Wong E.D."/>
            <person name="Lloyd P."/>
            <person name="Skrzypek M.S."/>
            <person name="Miyasato S.R."/>
            <person name="Simison M."/>
            <person name="Cherry J.M."/>
        </authorList>
    </citation>
    <scope>GENOME REANNOTATION</scope>
    <source>
        <strain>ATCC 204508 / S288c</strain>
    </source>
</reference>
<reference key="3">
    <citation type="journal article" date="2000" name="J. Bacteriol.">
        <title>The yeast model for Batten disease: mutations in BTN1, BTN2, and HSP30 alter pH homeostasis.</title>
        <authorList>
            <person name="Chattopadhyay S."/>
            <person name="Muzaffar N.E."/>
            <person name="Sherman F."/>
            <person name="Pearce D.A."/>
        </authorList>
    </citation>
    <scope>FUNCTION</scope>
    <scope>SUBCELLULAR LOCATION</scope>
</reference>
<reference key="4">
    <citation type="journal article" date="2002" name="Eukaryot. Cell">
        <title>Interaction with Btn2p is required for localization of Rsglp: Btn2p-mediated changes in arginine uptake in Saccharomyces cerevisiae.</title>
        <authorList>
            <person name="Chattopadhyay S."/>
            <person name="Pearce D.A."/>
        </authorList>
    </citation>
    <scope>FUNCTION</scope>
    <scope>INTERACTION WITH RHB1</scope>
    <scope>SUBCELLULAR LOCATION</scope>
</reference>
<reference key="5">
    <citation type="journal article" date="2003" name="Biochem. Biophys. Res. Commun.">
        <title>The yeast model for Batten disease: a role for Btn2p in the trafficking of the Golgi-associated vesicular targeting protein, Yif1p.</title>
        <authorList>
            <person name="Chattopadhyay S."/>
            <person name="Roberts P.M."/>
            <person name="Pearce D.A."/>
        </authorList>
    </citation>
    <scope>INTERACTION WITH YIF1</scope>
</reference>
<reference key="6">
    <citation type="journal article" date="2005" name="Eukaryot. Cell">
        <title>Interaction among Btn1p, Btn2p, and Ist2p reveals potential interplay among the vacuole, amino acid levels, and ion homeostasis in the yeast Saccharomyces cerevisiae.</title>
        <authorList>
            <person name="Kim Y."/>
            <person name="Chattopadhyay S."/>
            <person name="Locke S."/>
            <person name="Pearce D.A."/>
        </authorList>
    </citation>
    <scope>FUNCTION</scope>
    <scope>INTERACTION WITH IST2</scope>
</reference>
<reference key="7">
    <citation type="journal article" date="2011" name="Mol. Biol. Cell">
        <title>Btn3 is a negative regulator of Btn2-mediated endosomal protein trafficking and prion curing in yeast.</title>
        <authorList>
            <person name="Kanneganti V."/>
            <person name="Kama R."/>
            <person name="Gerst J.E."/>
        </authorList>
    </citation>
    <scope>FUNCTION</scope>
    <scope>SUBCELLULAR LOCATION</scope>
    <scope>INTERACTION WITH TDA3</scope>
</reference>
<protein>
    <recommendedName>
        <fullName>Protein BTN2</fullName>
    </recommendedName>
    <alternativeName>
        <fullName>Batten disease protein 2</fullName>
    </alternativeName>
</protein>
<feature type="chain" id="PRO_0000065007" description="Protein BTN2">
    <location>
        <begin position="1"/>
        <end position="410"/>
    </location>
</feature>
<feature type="region of interest" description="Disordered" evidence="2">
    <location>
        <begin position="223"/>
        <end position="264"/>
    </location>
</feature>
<feature type="region of interest" description="Disordered" evidence="2">
    <location>
        <begin position="276"/>
        <end position="410"/>
    </location>
</feature>
<feature type="coiled-coil region" evidence="1">
    <location>
        <begin position="243"/>
        <end position="330"/>
    </location>
</feature>
<feature type="compositionally biased region" description="Basic and acidic residues" evidence="2">
    <location>
        <begin position="233"/>
        <end position="264"/>
    </location>
</feature>
<feature type="compositionally biased region" description="Basic and acidic residues" evidence="2">
    <location>
        <begin position="276"/>
        <end position="311"/>
    </location>
</feature>
<feature type="compositionally biased region" description="Low complexity" evidence="2">
    <location>
        <begin position="334"/>
        <end position="362"/>
    </location>
</feature>
<feature type="compositionally biased region" description="Polar residues" evidence="2">
    <location>
        <begin position="364"/>
        <end position="373"/>
    </location>
</feature>